<gene>
    <name evidence="1" type="primary">gpmA</name>
    <name type="ordered locus">CA_C2741</name>
</gene>
<comment type="function">
    <text evidence="1">Catalyzes the interconversion of 2-phosphoglycerate and 3-phosphoglycerate.</text>
</comment>
<comment type="catalytic activity">
    <reaction evidence="1">
        <text>(2R)-2-phosphoglycerate = (2R)-3-phosphoglycerate</text>
        <dbReference type="Rhea" id="RHEA:15901"/>
        <dbReference type="ChEBI" id="CHEBI:58272"/>
        <dbReference type="ChEBI" id="CHEBI:58289"/>
        <dbReference type="EC" id="5.4.2.11"/>
    </reaction>
</comment>
<comment type="pathway">
    <text evidence="1">Carbohydrate degradation; glycolysis; pyruvate from D-glyceraldehyde 3-phosphate: step 3/5.</text>
</comment>
<comment type="similarity">
    <text evidence="1">Belongs to the phosphoglycerate mutase family. BPG-dependent PGAM subfamily.</text>
</comment>
<feature type="chain" id="PRO_0000179868" description="2,3-bisphosphoglycerate-dependent phosphoglycerate mutase">
    <location>
        <begin position="1"/>
        <end position="243"/>
    </location>
</feature>
<feature type="active site" description="Tele-phosphohistidine intermediate" evidence="1">
    <location>
        <position position="9"/>
    </location>
</feature>
<feature type="active site" description="Proton donor/acceptor" evidence="1">
    <location>
        <position position="87"/>
    </location>
</feature>
<feature type="binding site" evidence="1">
    <location>
        <begin position="8"/>
        <end position="15"/>
    </location>
    <ligand>
        <name>substrate</name>
    </ligand>
</feature>
<feature type="binding site" evidence="1">
    <location>
        <begin position="21"/>
        <end position="22"/>
    </location>
    <ligand>
        <name>substrate</name>
    </ligand>
</feature>
<feature type="binding site" evidence="1">
    <location>
        <position position="60"/>
    </location>
    <ligand>
        <name>substrate</name>
    </ligand>
</feature>
<feature type="binding site" evidence="1">
    <location>
        <begin position="87"/>
        <end position="90"/>
    </location>
    <ligand>
        <name>substrate</name>
    </ligand>
</feature>
<feature type="binding site" evidence="1">
    <location>
        <position position="98"/>
    </location>
    <ligand>
        <name>substrate</name>
    </ligand>
</feature>
<feature type="binding site" evidence="1">
    <location>
        <begin position="114"/>
        <end position="115"/>
    </location>
    <ligand>
        <name>substrate</name>
    </ligand>
</feature>
<feature type="binding site" evidence="1">
    <location>
        <begin position="183"/>
        <end position="184"/>
    </location>
    <ligand>
        <name>substrate</name>
    </ligand>
</feature>
<feature type="site" description="Transition state stabilizer" evidence="1">
    <location>
        <position position="182"/>
    </location>
</feature>
<keyword id="KW-0312">Gluconeogenesis</keyword>
<keyword id="KW-0324">Glycolysis</keyword>
<keyword id="KW-0413">Isomerase</keyword>
<keyword id="KW-1185">Reference proteome</keyword>
<protein>
    <recommendedName>
        <fullName evidence="1">2,3-bisphosphoglycerate-dependent phosphoglycerate mutase</fullName>
        <shortName evidence="1">BPG-dependent PGAM</shortName>
        <shortName evidence="1">PGAM</shortName>
        <shortName evidence="1">Phosphoglyceromutase</shortName>
        <shortName evidence="1">dPGM</shortName>
        <ecNumber evidence="1">5.4.2.11</ecNumber>
    </recommendedName>
</protein>
<reference key="1">
    <citation type="journal article" date="2001" name="J. Bacteriol.">
        <title>Genome sequence and comparative analysis of the solvent-producing bacterium Clostridium acetobutylicum.</title>
        <authorList>
            <person name="Noelling J."/>
            <person name="Breton G."/>
            <person name="Omelchenko M.V."/>
            <person name="Makarova K.S."/>
            <person name="Zeng Q."/>
            <person name="Gibson R."/>
            <person name="Lee H.M."/>
            <person name="Dubois J."/>
            <person name="Qiu D."/>
            <person name="Hitti J."/>
            <person name="Wolf Y.I."/>
            <person name="Tatusov R.L."/>
            <person name="Sabathe F."/>
            <person name="Doucette-Stamm L.A."/>
            <person name="Soucaille P."/>
            <person name="Daly M.J."/>
            <person name="Bennett G.N."/>
            <person name="Koonin E.V."/>
            <person name="Smith D.R."/>
        </authorList>
    </citation>
    <scope>NUCLEOTIDE SEQUENCE [LARGE SCALE GENOMIC DNA]</scope>
    <source>
        <strain>ATCC 824 / DSM 792 / JCM 1419 / IAM 19013 / LMG 5710 / NBRC 13948 / NRRL B-527 / VKM B-1787 / 2291 / W</strain>
    </source>
</reference>
<dbReference type="EC" id="5.4.2.11" evidence="1"/>
<dbReference type="EMBL" id="AE001437">
    <property type="protein sequence ID" value="AAK80687.1"/>
    <property type="molecule type" value="Genomic_DNA"/>
</dbReference>
<dbReference type="PIR" id="D97237">
    <property type="entry name" value="D97237"/>
</dbReference>
<dbReference type="RefSeq" id="NP_349347.1">
    <property type="nucleotide sequence ID" value="NC_003030.1"/>
</dbReference>
<dbReference type="RefSeq" id="WP_010966028.1">
    <property type="nucleotide sequence ID" value="NC_003030.1"/>
</dbReference>
<dbReference type="SMR" id="Q97FJ6"/>
<dbReference type="STRING" id="272562.CA_C2741"/>
<dbReference type="GeneID" id="44999229"/>
<dbReference type="KEGG" id="cac:CA_C2741"/>
<dbReference type="PATRIC" id="fig|272562.8.peg.2930"/>
<dbReference type="eggNOG" id="COG0588">
    <property type="taxonomic scope" value="Bacteria"/>
</dbReference>
<dbReference type="HOGENOM" id="CLU_033323_1_1_9"/>
<dbReference type="OrthoDB" id="9781415at2"/>
<dbReference type="UniPathway" id="UPA00109">
    <property type="reaction ID" value="UER00186"/>
</dbReference>
<dbReference type="Proteomes" id="UP000000814">
    <property type="component" value="Chromosome"/>
</dbReference>
<dbReference type="GO" id="GO:0004619">
    <property type="term" value="F:phosphoglycerate mutase activity"/>
    <property type="evidence" value="ECO:0007669"/>
    <property type="project" value="UniProtKB-EC"/>
</dbReference>
<dbReference type="GO" id="GO:0006094">
    <property type="term" value="P:gluconeogenesis"/>
    <property type="evidence" value="ECO:0007669"/>
    <property type="project" value="UniProtKB-UniRule"/>
</dbReference>
<dbReference type="GO" id="GO:0006096">
    <property type="term" value="P:glycolytic process"/>
    <property type="evidence" value="ECO:0007669"/>
    <property type="project" value="UniProtKB-UniRule"/>
</dbReference>
<dbReference type="CDD" id="cd07067">
    <property type="entry name" value="HP_PGM_like"/>
    <property type="match status" value="1"/>
</dbReference>
<dbReference type="FunFam" id="3.40.50.1240:FF:000003">
    <property type="entry name" value="2,3-bisphosphoglycerate-dependent phosphoglycerate mutase"/>
    <property type="match status" value="1"/>
</dbReference>
<dbReference type="Gene3D" id="3.40.50.1240">
    <property type="entry name" value="Phosphoglycerate mutase-like"/>
    <property type="match status" value="1"/>
</dbReference>
<dbReference type="HAMAP" id="MF_01039">
    <property type="entry name" value="PGAM_GpmA"/>
    <property type="match status" value="1"/>
</dbReference>
<dbReference type="InterPro" id="IPR013078">
    <property type="entry name" value="His_Pase_superF_clade-1"/>
</dbReference>
<dbReference type="InterPro" id="IPR029033">
    <property type="entry name" value="His_PPase_superfam"/>
</dbReference>
<dbReference type="InterPro" id="IPR001345">
    <property type="entry name" value="PG/BPGM_mutase_AS"/>
</dbReference>
<dbReference type="InterPro" id="IPR005952">
    <property type="entry name" value="Phosphogly_mut1"/>
</dbReference>
<dbReference type="NCBIfam" id="TIGR01258">
    <property type="entry name" value="pgm_1"/>
    <property type="match status" value="1"/>
</dbReference>
<dbReference type="NCBIfam" id="NF010713">
    <property type="entry name" value="PRK14115.1"/>
    <property type="match status" value="1"/>
</dbReference>
<dbReference type="PANTHER" id="PTHR11931">
    <property type="entry name" value="PHOSPHOGLYCERATE MUTASE"/>
    <property type="match status" value="1"/>
</dbReference>
<dbReference type="Pfam" id="PF00300">
    <property type="entry name" value="His_Phos_1"/>
    <property type="match status" value="2"/>
</dbReference>
<dbReference type="PIRSF" id="PIRSF000709">
    <property type="entry name" value="6PFK_2-Ptase"/>
    <property type="match status" value="1"/>
</dbReference>
<dbReference type="SMART" id="SM00855">
    <property type="entry name" value="PGAM"/>
    <property type="match status" value="1"/>
</dbReference>
<dbReference type="SUPFAM" id="SSF53254">
    <property type="entry name" value="Phosphoglycerate mutase-like"/>
    <property type="match status" value="1"/>
</dbReference>
<dbReference type="PROSITE" id="PS00175">
    <property type="entry name" value="PG_MUTASE"/>
    <property type="match status" value="1"/>
</dbReference>
<organism>
    <name type="scientific">Clostridium acetobutylicum (strain ATCC 824 / DSM 792 / JCM 1419 / IAM 19013 / LMG 5710 / NBRC 13948 / NRRL B-527 / VKM B-1787 / 2291 / W)</name>
    <dbReference type="NCBI Taxonomy" id="272562"/>
    <lineage>
        <taxon>Bacteria</taxon>
        <taxon>Bacillati</taxon>
        <taxon>Bacillota</taxon>
        <taxon>Clostridia</taxon>
        <taxon>Eubacteriales</taxon>
        <taxon>Clostridiaceae</taxon>
        <taxon>Clostridium</taxon>
    </lineage>
</organism>
<accession>Q97FJ6</accession>
<evidence type="ECO:0000255" key="1">
    <source>
        <dbReference type="HAMAP-Rule" id="MF_01039"/>
    </source>
</evidence>
<proteinExistence type="inferred from homology"/>
<sequence>MRKLVLLRHGQSEWNKENRFTGWTDVDLSVDGVSEAAQAGRILKKNNYTFDAAYTSVLKRAIRTLQIVLYEMDLLWIPVYKSWKLNERHYGALQGLNKDETRDKYGEDQVHLWRRSVEVRPPALEKSDKRYPGNEKKYASLKEEELPVTENLEDTEKRVLQDWRELIAPNIKGGKNIIISAHGNTLRALVKYLDNIPSDGIANLNIPTGTPLVYELDENLEPITRYYLGMDGKIEDDKFPKKV</sequence>
<name>GPMA_CLOAB</name>